<feature type="chain" id="PRO_0000353176" description="2-keto-3-deoxy-L-rhamnonate aldolase">
    <location>
        <begin position="1"/>
        <end position="267"/>
    </location>
</feature>
<feature type="active site" description="Proton acceptor" evidence="1">
    <location>
        <position position="49"/>
    </location>
</feature>
<feature type="binding site" evidence="1">
    <location>
        <position position="151"/>
    </location>
    <ligand>
        <name>substrate</name>
    </ligand>
</feature>
<feature type="binding site" evidence="1">
    <location>
        <position position="153"/>
    </location>
    <ligand>
        <name>Mg(2+)</name>
        <dbReference type="ChEBI" id="CHEBI:18420"/>
    </ligand>
</feature>
<feature type="binding site" evidence="1">
    <location>
        <position position="178"/>
    </location>
    <ligand>
        <name>substrate</name>
    </ligand>
</feature>
<feature type="binding site" evidence="1">
    <location>
        <position position="179"/>
    </location>
    <ligand>
        <name>Mg(2+)</name>
        <dbReference type="ChEBI" id="CHEBI:18420"/>
    </ligand>
</feature>
<feature type="binding site" evidence="1">
    <location>
        <position position="179"/>
    </location>
    <ligand>
        <name>substrate</name>
    </ligand>
</feature>
<feature type="site" description="Transition state stabilizer" evidence="1">
    <location>
        <position position="74"/>
    </location>
</feature>
<feature type="site" description="Increases basicity of active site His" evidence="1">
    <location>
        <position position="88"/>
    </location>
</feature>
<name>RHMA_SALTI</name>
<organism>
    <name type="scientific">Salmonella typhi</name>
    <dbReference type="NCBI Taxonomy" id="90370"/>
    <lineage>
        <taxon>Bacteria</taxon>
        <taxon>Pseudomonadati</taxon>
        <taxon>Pseudomonadota</taxon>
        <taxon>Gammaproteobacteria</taxon>
        <taxon>Enterobacterales</taxon>
        <taxon>Enterobacteriaceae</taxon>
        <taxon>Salmonella</taxon>
    </lineage>
</organism>
<reference key="1">
    <citation type="journal article" date="2001" name="Nature">
        <title>Complete genome sequence of a multiple drug resistant Salmonella enterica serovar Typhi CT18.</title>
        <authorList>
            <person name="Parkhill J."/>
            <person name="Dougan G."/>
            <person name="James K.D."/>
            <person name="Thomson N.R."/>
            <person name="Pickard D."/>
            <person name="Wain J."/>
            <person name="Churcher C.M."/>
            <person name="Mungall K.L."/>
            <person name="Bentley S.D."/>
            <person name="Holden M.T.G."/>
            <person name="Sebaihia M."/>
            <person name="Baker S."/>
            <person name="Basham D."/>
            <person name="Brooks K."/>
            <person name="Chillingworth T."/>
            <person name="Connerton P."/>
            <person name="Cronin A."/>
            <person name="Davis P."/>
            <person name="Davies R.M."/>
            <person name="Dowd L."/>
            <person name="White N."/>
            <person name="Farrar J."/>
            <person name="Feltwell T."/>
            <person name="Hamlin N."/>
            <person name="Haque A."/>
            <person name="Hien T.T."/>
            <person name="Holroyd S."/>
            <person name="Jagels K."/>
            <person name="Krogh A."/>
            <person name="Larsen T.S."/>
            <person name="Leather S."/>
            <person name="Moule S."/>
            <person name="O'Gaora P."/>
            <person name="Parry C."/>
            <person name="Quail M.A."/>
            <person name="Rutherford K.M."/>
            <person name="Simmonds M."/>
            <person name="Skelton J."/>
            <person name="Stevens K."/>
            <person name="Whitehead S."/>
            <person name="Barrell B.G."/>
        </authorList>
    </citation>
    <scope>NUCLEOTIDE SEQUENCE [LARGE SCALE GENOMIC DNA]</scope>
    <source>
        <strain>CT18</strain>
    </source>
</reference>
<reference key="2">
    <citation type="journal article" date="2003" name="J. Bacteriol.">
        <title>Comparative genomics of Salmonella enterica serovar Typhi strains Ty2 and CT18.</title>
        <authorList>
            <person name="Deng W."/>
            <person name="Liou S.-R."/>
            <person name="Plunkett G. III"/>
            <person name="Mayhew G.F."/>
            <person name="Rose D.J."/>
            <person name="Burland V."/>
            <person name="Kodoyianni V."/>
            <person name="Schwartz D.C."/>
            <person name="Blattner F.R."/>
        </authorList>
    </citation>
    <scope>NUCLEOTIDE SEQUENCE [LARGE SCALE GENOMIC DNA]</scope>
    <source>
        <strain>ATCC 700931 / Ty2</strain>
    </source>
</reference>
<comment type="function">
    <text evidence="1">Catalyzes the reversible retro-aldol cleavage of 2-keto-3-deoxy-L-rhamnonate (KDR) to pyruvate and lactaldehyde.</text>
</comment>
<comment type="catalytic activity">
    <reaction evidence="1">
        <text>2-dehydro-3-deoxy-L-rhamnonate = (S)-lactaldehyde + pyruvate</text>
        <dbReference type="Rhea" id="RHEA:25784"/>
        <dbReference type="ChEBI" id="CHEBI:15361"/>
        <dbReference type="ChEBI" id="CHEBI:18041"/>
        <dbReference type="ChEBI" id="CHEBI:58371"/>
        <dbReference type="EC" id="4.1.2.53"/>
    </reaction>
</comment>
<comment type="cofactor">
    <cofactor evidence="1">
        <name>Mg(2+)</name>
        <dbReference type="ChEBI" id="CHEBI:18420"/>
    </cofactor>
    <text evidence="1">Binds 1 Mg(2+) ion per subunit.</text>
</comment>
<comment type="subunit">
    <text evidence="1">Homohexamer.</text>
</comment>
<comment type="similarity">
    <text evidence="1">Belongs to the HpcH/HpaI aldolase family. KDR aldolase subfamily.</text>
</comment>
<sequence length="267" mass="28842">MNALLSNPFKEGLRKRDTQIGLWLSSTTSYMAEIAATSGYDWLLIDGEHAPNTVQDLYHQLQAIAPYASQPVIRPIEGSKALIKQVLDIGAQTLLIPMVDTAEQARQVVSATRYPPLGQRGVGASVARAARWGRIDNYMAQANESLCLLVQVESKVALENLDAILEVEGIDGVFIGPADLSASLGYPDNAGHPEVQRIIESCIYRIRAAGKAAGFLAVDPAMAQKCLAWGANFVAVGVDTMLYTEALDSRLAMFKSVQSVSTAKRSY</sequence>
<dbReference type="EC" id="4.1.2.53" evidence="1"/>
<dbReference type="EMBL" id="AE014613">
    <property type="protein sequence ID" value="AAO68280.1"/>
    <property type="molecule type" value="Genomic_DNA"/>
</dbReference>
<dbReference type="EMBL" id="AL513382">
    <property type="protein sequence ID" value="CAD07522.1"/>
    <property type="molecule type" value="Genomic_DNA"/>
</dbReference>
<dbReference type="RefSeq" id="NP_456832.1">
    <property type="nucleotide sequence ID" value="NC_003198.1"/>
</dbReference>
<dbReference type="SMR" id="Q8Z549"/>
<dbReference type="STRING" id="220341.gene:17586419"/>
<dbReference type="KEGG" id="stt:t0574"/>
<dbReference type="KEGG" id="sty:STY2519"/>
<dbReference type="PATRIC" id="fig|220341.7.peg.2550"/>
<dbReference type="eggNOG" id="COG3836">
    <property type="taxonomic scope" value="Bacteria"/>
</dbReference>
<dbReference type="HOGENOM" id="CLU_059964_1_0_6"/>
<dbReference type="OMA" id="HYLALGC"/>
<dbReference type="OrthoDB" id="86160at2"/>
<dbReference type="Proteomes" id="UP000000541">
    <property type="component" value="Chromosome"/>
</dbReference>
<dbReference type="Proteomes" id="UP000002670">
    <property type="component" value="Chromosome"/>
</dbReference>
<dbReference type="GO" id="GO:0005737">
    <property type="term" value="C:cytoplasm"/>
    <property type="evidence" value="ECO:0007669"/>
    <property type="project" value="TreeGrafter"/>
</dbReference>
<dbReference type="GO" id="GO:0106099">
    <property type="term" value="F:2-keto-3-deoxy-L-rhamnonate aldolase activity"/>
    <property type="evidence" value="ECO:0007669"/>
    <property type="project" value="UniProtKB-EC"/>
</dbReference>
<dbReference type="GO" id="GO:0000287">
    <property type="term" value="F:magnesium ion binding"/>
    <property type="evidence" value="ECO:0007669"/>
    <property type="project" value="UniProtKB-UniRule"/>
</dbReference>
<dbReference type="FunFam" id="3.20.20.60:FF:000004">
    <property type="entry name" value="5-keto-4-deoxy-D-glucarate aldolase"/>
    <property type="match status" value="1"/>
</dbReference>
<dbReference type="Gene3D" id="3.20.20.60">
    <property type="entry name" value="Phosphoenolpyruvate-binding domains"/>
    <property type="match status" value="1"/>
</dbReference>
<dbReference type="HAMAP" id="MF_01290">
    <property type="entry name" value="KDR_aldolase"/>
    <property type="match status" value="1"/>
</dbReference>
<dbReference type="InterPro" id="IPR005000">
    <property type="entry name" value="Aldolase/citrate-lyase_domain"/>
</dbReference>
<dbReference type="InterPro" id="IPR050251">
    <property type="entry name" value="HpcH-HpaI_aldolase"/>
</dbReference>
<dbReference type="InterPro" id="IPR023593">
    <property type="entry name" value="KDR_aldolase"/>
</dbReference>
<dbReference type="InterPro" id="IPR015813">
    <property type="entry name" value="Pyrv/PenolPyrv_kinase-like_dom"/>
</dbReference>
<dbReference type="InterPro" id="IPR040442">
    <property type="entry name" value="Pyrv_kinase-like_dom_sf"/>
</dbReference>
<dbReference type="NCBIfam" id="NF007521">
    <property type="entry name" value="PRK10128.1"/>
    <property type="match status" value="1"/>
</dbReference>
<dbReference type="PANTHER" id="PTHR30502">
    <property type="entry name" value="2-KETO-3-DEOXY-L-RHAMNONATE ALDOLASE"/>
    <property type="match status" value="1"/>
</dbReference>
<dbReference type="PANTHER" id="PTHR30502:SF5">
    <property type="entry name" value="2-KETO-3-DEOXY-L-RHAMNONATE ALDOLASE"/>
    <property type="match status" value="1"/>
</dbReference>
<dbReference type="Pfam" id="PF03328">
    <property type="entry name" value="HpcH_HpaI"/>
    <property type="match status" value="1"/>
</dbReference>
<dbReference type="SUPFAM" id="SSF51621">
    <property type="entry name" value="Phosphoenolpyruvate/pyruvate domain"/>
    <property type="match status" value="1"/>
</dbReference>
<protein>
    <recommendedName>
        <fullName evidence="1">2-keto-3-deoxy-L-rhamnonate aldolase</fullName>
        <shortName evidence="1">KDR aldolase</shortName>
        <ecNumber evidence="1">4.1.2.53</ecNumber>
    </recommendedName>
    <alternativeName>
        <fullName evidence="1">2-dehydro-3-deoxyrhamnonate aldolase</fullName>
    </alternativeName>
</protein>
<keyword id="KW-0456">Lyase</keyword>
<keyword id="KW-0460">Magnesium</keyword>
<keyword id="KW-0479">Metal-binding</keyword>
<gene>
    <name evidence="1" type="primary">rhmA</name>
    <name type="ordered locus">STY2519</name>
    <name type="ordered locus">t0574</name>
</gene>
<proteinExistence type="inferred from homology"/>
<evidence type="ECO:0000255" key="1">
    <source>
        <dbReference type="HAMAP-Rule" id="MF_01290"/>
    </source>
</evidence>
<accession>Q8Z549</accession>
<accession>Q7CB77</accession>